<comment type="function">
    <text evidence="3">Component of the TOM (translocase of outer membrane) receptor complex responsible for the recognition and translocation of cytosolically synthesized mitochondrial preproteins. TOM7 is involved in assembly and stability of the TOM complex.</text>
</comment>
<comment type="subunit">
    <text evidence="6">Forms part of the preprotein translocase complex of the outer mitochondrial membrane (TOM complex) which consists of at least 7 different proteins (TOM5, TOM6, TOM7, TOM20, TOM22, TOM40 and TOM70).</text>
</comment>
<comment type="subcellular location">
    <subcellularLocation>
        <location>Mitochondrion outer membrane</location>
        <topology>Single-pass membrane protein</topology>
    </subcellularLocation>
</comment>
<comment type="miscellaneous">
    <text evidence="4">Present with 3250 molecules/cell in log phase SD medium.</text>
</comment>
<comment type="similarity">
    <text evidence="7">Belongs to the Tom7 family.</text>
</comment>
<feature type="initiator methionine" description="Removed" evidence="5">
    <location>
        <position position="1"/>
    </location>
</feature>
<feature type="chain" id="PRO_0000046767" description="Mitochondrial import receptor subunit TOM7">
    <location>
        <begin position="2"/>
        <end position="60"/>
    </location>
</feature>
<feature type="topological domain" description="Cytoplasmic" evidence="1">
    <location>
        <begin position="2"/>
        <end position="19"/>
    </location>
</feature>
<feature type="transmembrane region" description="Helical" evidence="2">
    <location>
        <begin position="20"/>
        <end position="41"/>
    </location>
</feature>
<feature type="topological domain" description="Mitochondrial intermembrane" evidence="1">
    <location>
        <begin position="42"/>
        <end position="60"/>
    </location>
</feature>
<feature type="helix" evidence="8">
    <location>
        <begin position="12"/>
        <end position="42"/>
    </location>
</feature>
<feature type="helix" evidence="8">
    <location>
        <begin position="50"/>
        <end position="54"/>
    </location>
</feature>
<protein>
    <recommendedName>
        <fullName>Mitochondrial import receptor subunit TOM7</fullName>
    </recommendedName>
    <alternativeName>
        <fullName>Translocase of outer membrane 7 kDa subunit</fullName>
    </alternativeName>
</protein>
<evidence type="ECO:0000250" key="1"/>
<evidence type="ECO:0000255" key="2"/>
<evidence type="ECO:0000269" key="3">
    <source>
    </source>
</evidence>
<evidence type="ECO:0000269" key="4">
    <source>
    </source>
</evidence>
<evidence type="ECO:0000269" key="5">
    <source>
    </source>
</evidence>
<evidence type="ECO:0000269" key="6">
    <source>
    </source>
</evidence>
<evidence type="ECO:0000305" key="7"/>
<evidence type="ECO:0007829" key="8">
    <source>
        <dbReference type="PDB" id="6UCU"/>
    </source>
</evidence>
<proteinExistence type="evidence at protein level"/>
<dbReference type="EMBL" id="Z71346">
    <property type="protein sequence ID" value="CAA95944.1"/>
    <property type="molecule type" value="Genomic_DNA"/>
</dbReference>
<dbReference type="EMBL" id="AY558519">
    <property type="protein sequence ID" value="AAS56845.1"/>
    <property type="molecule type" value="Genomic_DNA"/>
</dbReference>
<dbReference type="EMBL" id="BK006947">
    <property type="protein sequence ID" value="DAA10475.1"/>
    <property type="molecule type" value="Genomic_DNA"/>
</dbReference>
<dbReference type="PIR" id="S63002">
    <property type="entry name" value="S63002"/>
</dbReference>
<dbReference type="RefSeq" id="NP_014329.1">
    <property type="nucleotide sequence ID" value="NM_001182908.1"/>
</dbReference>
<dbReference type="PDB" id="6JNF">
    <property type="method" value="EM"/>
    <property type="resolution" value="3.81 A"/>
    <property type="chains" value="B/G=1-60"/>
</dbReference>
<dbReference type="PDB" id="6UCU">
    <property type="method" value="EM"/>
    <property type="resolution" value="3.06 A"/>
    <property type="chains" value="E/M=1-60"/>
</dbReference>
<dbReference type="PDB" id="6UCV">
    <property type="method" value="EM"/>
    <property type="resolution" value="4.10 A"/>
    <property type="chains" value="E/M/e/m=1-60"/>
</dbReference>
<dbReference type="PDB" id="8HCO">
    <property type="method" value="EM"/>
    <property type="resolution" value="4.10 A"/>
    <property type="chains" value="E/M=1-60"/>
</dbReference>
<dbReference type="PDB" id="8W5J">
    <property type="method" value="EM"/>
    <property type="resolution" value="4.40 A"/>
    <property type="chains" value="E/M=1-60"/>
</dbReference>
<dbReference type="PDB" id="8W5K">
    <property type="method" value="EM"/>
    <property type="resolution" value="3.60 A"/>
    <property type="chains" value="E/M=1-60"/>
</dbReference>
<dbReference type="PDB" id="8XKW">
    <property type="method" value="EM"/>
    <property type="resolution" value="3.64 A"/>
    <property type="chains" value="E/J=1-60"/>
</dbReference>
<dbReference type="PDB" id="8XKX">
    <property type="method" value="EM"/>
    <property type="resolution" value="3.70 A"/>
    <property type="chains" value="E/J=1-60"/>
</dbReference>
<dbReference type="PDB" id="8XKY">
    <property type="method" value="EM"/>
    <property type="resolution" value="3.42 A"/>
    <property type="chains" value="E/J=1-60"/>
</dbReference>
<dbReference type="PDBsum" id="6JNF"/>
<dbReference type="PDBsum" id="6UCU"/>
<dbReference type="PDBsum" id="6UCV"/>
<dbReference type="PDBsum" id="8HCO"/>
<dbReference type="PDBsum" id="8W5J"/>
<dbReference type="PDBsum" id="8W5K"/>
<dbReference type="PDBsum" id="8XKW"/>
<dbReference type="PDBsum" id="8XKX"/>
<dbReference type="PDBsum" id="8XKY"/>
<dbReference type="EMDB" id="EMD-20728"/>
<dbReference type="EMDB" id="EMD-20729"/>
<dbReference type="EMDB" id="EMD-34660"/>
<dbReference type="EMDB" id="EMD-37294"/>
<dbReference type="EMDB" id="EMD-37295"/>
<dbReference type="EMDB" id="EMD-38429"/>
<dbReference type="EMDB" id="EMD-38430"/>
<dbReference type="EMDB" id="EMD-38431"/>
<dbReference type="EMDB" id="EMD-9851"/>
<dbReference type="SMR" id="P53507"/>
<dbReference type="BioGRID" id="35753">
    <property type="interactions" value="182"/>
</dbReference>
<dbReference type="ComplexPortal" id="CPX-473">
    <property type="entry name" value="TOM40 mitochondrial outer membrane translocase core complex"/>
</dbReference>
<dbReference type="ComplexPortal" id="CPX-474">
    <property type="entry name" value="TOM40 mitochondrial outer membrane translocase holocomplex"/>
</dbReference>
<dbReference type="DIP" id="DIP-4364N"/>
<dbReference type="FunCoup" id="P53507">
    <property type="interactions" value="81"/>
</dbReference>
<dbReference type="IntAct" id="P53507">
    <property type="interactions" value="5"/>
</dbReference>
<dbReference type="MINT" id="P53507"/>
<dbReference type="STRING" id="4932.YNL070W"/>
<dbReference type="TCDB" id="3.A.8.1.1">
    <property type="family name" value="the mitochondrial protein translocase (mpt) family"/>
</dbReference>
<dbReference type="PaxDb" id="4932-YNL070W"/>
<dbReference type="PeptideAtlas" id="P53507"/>
<dbReference type="EnsemblFungi" id="YNL070W_mRNA">
    <property type="protein sequence ID" value="YNL070W"/>
    <property type="gene ID" value="YNL070W"/>
</dbReference>
<dbReference type="GeneID" id="855654"/>
<dbReference type="KEGG" id="sce:YNL070W"/>
<dbReference type="AGR" id="SGD:S000005014"/>
<dbReference type="SGD" id="S000005014">
    <property type="gene designation" value="TOM7"/>
</dbReference>
<dbReference type="VEuPathDB" id="FungiDB:YNL070W"/>
<dbReference type="eggNOG" id="KOG4449">
    <property type="taxonomic scope" value="Eukaryota"/>
</dbReference>
<dbReference type="HOGENOM" id="CLU_173610_1_1_1"/>
<dbReference type="InParanoid" id="P53507"/>
<dbReference type="OMA" id="FILYLGW"/>
<dbReference type="OrthoDB" id="284357at2759"/>
<dbReference type="BioCyc" id="YEAST:G3O-33100-MONOMER"/>
<dbReference type="BioGRID-ORCS" id="855654">
    <property type="hits" value="0 hits in 10 CRISPR screens"/>
</dbReference>
<dbReference type="PRO" id="PR:P53507"/>
<dbReference type="Proteomes" id="UP000002311">
    <property type="component" value="Chromosome XIV"/>
</dbReference>
<dbReference type="RNAct" id="P53507">
    <property type="molecule type" value="protein"/>
</dbReference>
<dbReference type="GO" id="GO:0005741">
    <property type="term" value="C:mitochondrial outer membrane"/>
    <property type="evidence" value="ECO:0000314"/>
    <property type="project" value="ComplexPortal"/>
</dbReference>
<dbReference type="GO" id="GO:0005742">
    <property type="term" value="C:mitochondrial outer membrane translocase complex"/>
    <property type="evidence" value="ECO:0000314"/>
    <property type="project" value="SGD"/>
</dbReference>
<dbReference type="GO" id="GO:0005739">
    <property type="term" value="C:mitochondrion"/>
    <property type="evidence" value="ECO:0007005"/>
    <property type="project" value="SGD"/>
</dbReference>
<dbReference type="GO" id="GO:0030150">
    <property type="term" value="P:protein import into mitochondrial matrix"/>
    <property type="evidence" value="ECO:0000315"/>
    <property type="project" value="SGD"/>
</dbReference>
<dbReference type="GO" id="GO:0045040">
    <property type="term" value="P:protein insertion into mitochondrial outer membrane"/>
    <property type="evidence" value="ECO:0000314"/>
    <property type="project" value="ComplexPortal"/>
</dbReference>
<dbReference type="InterPro" id="IPR012621">
    <property type="entry name" value="Tom7"/>
</dbReference>
<dbReference type="PANTHER" id="PTHR34944">
    <property type="entry name" value="MITOCHONDRIAL IMPORT RECEPTOR SUBUNIT TOM7"/>
    <property type="match status" value="1"/>
</dbReference>
<dbReference type="PANTHER" id="PTHR34944:SF2">
    <property type="entry name" value="MITOCHONDRIAL IMPORT RECEPTOR SUBUNIT TOM7"/>
    <property type="match status" value="1"/>
</dbReference>
<dbReference type="Pfam" id="PF08038">
    <property type="entry name" value="Tom7"/>
    <property type="match status" value="1"/>
</dbReference>
<organism>
    <name type="scientific">Saccharomyces cerevisiae (strain ATCC 204508 / S288c)</name>
    <name type="common">Baker's yeast</name>
    <dbReference type="NCBI Taxonomy" id="559292"/>
    <lineage>
        <taxon>Eukaryota</taxon>
        <taxon>Fungi</taxon>
        <taxon>Dikarya</taxon>
        <taxon>Ascomycota</taxon>
        <taxon>Saccharomycotina</taxon>
        <taxon>Saccharomycetes</taxon>
        <taxon>Saccharomycetales</taxon>
        <taxon>Saccharomycetaceae</taxon>
        <taxon>Saccharomyces</taxon>
    </lineage>
</organism>
<accession>P53507</accession>
<accession>D6W1A9</accession>
<reference key="1">
    <citation type="journal article" date="1996" name="EMBO J.">
        <title>Tom7 modulates the dynamics of the mitochondrial outer membrane translocase and plays a pathway-related role in protein import.</title>
        <authorList>
            <person name="Hoenlinger A."/>
            <person name="Boemer U."/>
            <person name="Alconada A."/>
            <person name="Eckerskorn C."/>
            <person name="Lottspeich F."/>
            <person name="Dietmeier K."/>
            <person name="Pfanner N."/>
        </authorList>
    </citation>
    <scope>NUCLEOTIDE SEQUENCE [GENOMIC DNA]</scope>
    <scope>PROTEIN SEQUENCE OF 2-12</scope>
</reference>
<reference key="2">
    <citation type="journal article" date="1996" name="Yeast">
        <title>Sequencing a cosmid clone of Saccharomyces cerevisiae chromosome XIV reveals 12 new open reading frames (ORFs) and an ancient duplication of six ORFs.</title>
        <authorList>
            <person name="Poehlmann R."/>
            <person name="Philippsen P."/>
        </authorList>
    </citation>
    <scope>NUCLEOTIDE SEQUENCE [GENOMIC DNA]</scope>
    <source>
        <strain>ATCC 96604 / S288c / FY1679</strain>
    </source>
</reference>
<reference key="3">
    <citation type="journal article" date="1997" name="Nature">
        <title>The nucleotide sequence of Saccharomyces cerevisiae chromosome XIV and its evolutionary implications.</title>
        <authorList>
            <person name="Philippsen P."/>
            <person name="Kleine K."/>
            <person name="Poehlmann R."/>
            <person name="Duesterhoeft A."/>
            <person name="Hamberg K."/>
            <person name="Hegemann J.H."/>
            <person name="Obermaier B."/>
            <person name="Urrestarazu L.A."/>
            <person name="Aert R."/>
            <person name="Albermann K."/>
            <person name="Altmann R."/>
            <person name="Andre B."/>
            <person name="Baladron V."/>
            <person name="Ballesta J.P.G."/>
            <person name="Becam A.-M."/>
            <person name="Beinhauer J.D."/>
            <person name="Boskovic J."/>
            <person name="Buitrago M.J."/>
            <person name="Bussereau F."/>
            <person name="Coster F."/>
            <person name="Crouzet M."/>
            <person name="D'Angelo M."/>
            <person name="Dal Pero F."/>
            <person name="De Antoni A."/>
            <person name="del Rey F."/>
            <person name="Doignon F."/>
            <person name="Domdey H."/>
            <person name="Dubois E."/>
            <person name="Fiedler T.A."/>
            <person name="Fleig U."/>
            <person name="Floeth M."/>
            <person name="Fritz C."/>
            <person name="Gaillardin C."/>
            <person name="Garcia-Cantalejo J.M."/>
            <person name="Glansdorff N."/>
            <person name="Goffeau A."/>
            <person name="Gueldener U."/>
            <person name="Herbert C.J."/>
            <person name="Heumann K."/>
            <person name="Heuss-Neitzel D."/>
            <person name="Hilbert H."/>
            <person name="Hinni K."/>
            <person name="Iraqui Houssaini I."/>
            <person name="Jacquet M."/>
            <person name="Jimenez A."/>
            <person name="Jonniaux J.-L."/>
            <person name="Karpfinger-Hartl L."/>
            <person name="Lanfranchi G."/>
            <person name="Lepingle A."/>
            <person name="Levesque H."/>
            <person name="Lyck R."/>
            <person name="Maftahi M."/>
            <person name="Mallet L."/>
            <person name="Maurer C.T.C."/>
            <person name="Messenguy F."/>
            <person name="Mewes H.-W."/>
            <person name="Moestl D."/>
            <person name="Nasr F."/>
            <person name="Nicaud J.-M."/>
            <person name="Niedenthal R.K."/>
            <person name="Pandolfo D."/>
            <person name="Pierard A."/>
            <person name="Piravandi E."/>
            <person name="Planta R.J."/>
            <person name="Pohl T.M."/>
            <person name="Purnelle B."/>
            <person name="Rebischung C."/>
            <person name="Remacha M.A."/>
            <person name="Revuelta J.L."/>
            <person name="Rinke M."/>
            <person name="Saiz J.E."/>
            <person name="Sartorello F."/>
            <person name="Scherens B."/>
            <person name="Sen-Gupta M."/>
            <person name="Soler-Mira A."/>
            <person name="Urbanus J.H.M."/>
            <person name="Valle G."/>
            <person name="Van Dyck L."/>
            <person name="Verhasselt P."/>
            <person name="Vierendeels F."/>
            <person name="Vissers S."/>
            <person name="Voet M."/>
            <person name="Volckaert G."/>
            <person name="Wach A."/>
            <person name="Wambutt R."/>
            <person name="Wedler H."/>
            <person name="Zollner A."/>
            <person name="Hani J."/>
        </authorList>
    </citation>
    <scope>NUCLEOTIDE SEQUENCE [LARGE SCALE GENOMIC DNA]</scope>
    <source>
        <strain>ATCC 204508 / S288c</strain>
    </source>
</reference>
<reference key="4">
    <citation type="journal article" date="2014" name="G3 (Bethesda)">
        <title>The reference genome sequence of Saccharomyces cerevisiae: Then and now.</title>
        <authorList>
            <person name="Engel S.R."/>
            <person name="Dietrich F.S."/>
            <person name="Fisk D.G."/>
            <person name="Binkley G."/>
            <person name="Balakrishnan R."/>
            <person name="Costanzo M.C."/>
            <person name="Dwight S.S."/>
            <person name="Hitz B.C."/>
            <person name="Karra K."/>
            <person name="Nash R.S."/>
            <person name="Weng S."/>
            <person name="Wong E.D."/>
            <person name="Lloyd P."/>
            <person name="Skrzypek M.S."/>
            <person name="Miyasato S.R."/>
            <person name="Simison M."/>
            <person name="Cherry J.M."/>
        </authorList>
    </citation>
    <scope>GENOME REANNOTATION</scope>
    <source>
        <strain>ATCC 204508 / S288c</strain>
    </source>
</reference>
<reference key="5">
    <citation type="journal article" date="2007" name="Genome Res.">
        <title>Approaching a complete repository of sequence-verified protein-encoding clones for Saccharomyces cerevisiae.</title>
        <authorList>
            <person name="Hu Y."/>
            <person name="Rolfs A."/>
            <person name="Bhullar B."/>
            <person name="Murthy T.V.S."/>
            <person name="Zhu C."/>
            <person name="Berger M.F."/>
            <person name="Camargo A.A."/>
            <person name="Kelley F."/>
            <person name="McCarron S."/>
            <person name="Jepson D."/>
            <person name="Richardson A."/>
            <person name="Raphael J."/>
            <person name="Moreira D."/>
            <person name="Taycher E."/>
            <person name="Zuo D."/>
            <person name="Mohr S."/>
            <person name="Kane M.F."/>
            <person name="Williamson J."/>
            <person name="Simpson A.J.G."/>
            <person name="Bulyk M.L."/>
            <person name="Harlow E."/>
            <person name="Marsischky G."/>
            <person name="Kolodner R.D."/>
            <person name="LaBaer J."/>
        </authorList>
    </citation>
    <scope>NUCLEOTIDE SEQUENCE [GENOMIC DNA]</scope>
    <source>
        <strain>ATCC 204508 / S288c</strain>
    </source>
</reference>
<reference key="6">
    <citation type="journal article" date="1998" name="Mol. Cell. Biol.">
        <title>Preprotein translocase of the outer mitochondrial membrane: molecular dissection and assembly of the general import pore complex.</title>
        <authorList>
            <person name="Dekker P.J.T."/>
            <person name="Ryan M.T."/>
            <person name="Brix J."/>
            <person name="Mueller H."/>
            <person name="Hoenlinger A."/>
            <person name="Pfanner N."/>
        </authorList>
    </citation>
    <scope>IDENTIFICATION IN THE TOM COMPLEX</scope>
</reference>
<reference key="7">
    <citation type="journal article" date="2001" name="Nat. Struct. Biol.">
        <title>Multistep assembly of the protein import channel of the mitochondrial outer membrane.</title>
        <authorList>
            <person name="Model K."/>
            <person name="Meisinger C."/>
            <person name="Prinz T."/>
            <person name="Wiedemann N."/>
            <person name="Truscott K.N."/>
            <person name="Pfanner N."/>
            <person name="Ryan M.T."/>
        </authorList>
    </citation>
    <scope>FUNCTION</scope>
</reference>
<reference key="8">
    <citation type="journal article" date="2003" name="Nature">
        <title>Global analysis of protein expression in yeast.</title>
        <authorList>
            <person name="Ghaemmaghami S."/>
            <person name="Huh W.-K."/>
            <person name="Bower K."/>
            <person name="Howson R.W."/>
            <person name="Belle A."/>
            <person name="Dephoure N."/>
            <person name="O'Shea E.K."/>
            <person name="Weissman J.S."/>
        </authorList>
    </citation>
    <scope>LEVEL OF PROTEIN EXPRESSION [LARGE SCALE ANALYSIS]</scope>
</reference>
<reference key="9">
    <citation type="journal article" date="2012" name="Proc. Natl. Acad. Sci. U.S.A.">
        <title>N-terminal acetylome analyses and functional insights of the N-terminal acetyltransferase NatB.</title>
        <authorList>
            <person name="Van Damme P."/>
            <person name="Lasa M."/>
            <person name="Polevoda B."/>
            <person name="Gazquez C."/>
            <person name="Elosegui-Artola A."/>
            <person name="Kim D.S."/>
            <person name="De Juan-Pardo E."/>
            <person name="Demeyer K."/>
            <person name="Hole K."/>
            <person name="Larrea E."/>
            <person name="Timmerman E."/>
            <person name="Prieto J."/>
            <person name="Arnesen T."/>
            <person name="Sherman F."/>
            <person name="Gevaert K."/>
            <person name="Aldabe R."/>
        </authorList>
    </citation>
    <scope>IDENTIFICATION BY MASS SPECTROMETRY [LARGE SCALE ANALYSIS]</scope>
</reference>
<sequence length="60" mass="6870">MSFLPSFILSDESKERISKILTLTHNVAHYGWIPFVLYLGWAHTSNRPNFLNLLSPLPSV</sequence>
<keyword id="KW-0002">3D-structure</keyword>
<keyword id="KW-0903">Direct protein sequencing</keyword>
<keyword id="KW-0472">Membrane</keyword>
<keyword id="KW-0496">Mitochondrion</keyword>
<keyword id="KW-1000">Mitochondrion outer membrane</keyword>
<keyword id="KW-0653">Protein transport</keyword>
<keyword id="KW-1185">Reference proteome</keyword>
<keyword id="KW-0812">Transmembrane</keyword>
<keyword id="KW-1133">Transmembrane helix</keyword>
<keyword id="KW-0813">Transport</keyword>
<gene>
    <name type="primary">TOM7</name>
    <name type="synonym">MOM7</name>
    <name type="ordered locus">YNL070W</name>
    <name type="ORF">N2378</name>
</gene>
<name>TOM7_YEAST</name>